<protein>
    <recommendedName>
        <fullName evidence="3">Peptide PGLa-R4</fullName>
    </recommendedName>
</protein>
<name>PGLR4_XENRU</name>
<comment type="function">
    <text evidence="1">Antimicrobial peptide.</text>
</comment>
<comment type="subcellular location">
    <subcellularLocation>
        <location evidence="2">Secreted</location>
    </subcellularLocation>
</comment>
<comment type="tissue specificity">
    <text evidence="5">Expressed by the skin glands.</text>
</comment>
<comment type="mass spectrometry"/>
<comment type="similarity">
    <text evidence="4">Belongs to the gastrin/cholecystokinin family. Magainin subfamily.</text>
</comment>
<feature type="peptide" id="PRO_0000440929" description="Peptide PGLa-R4" evidence="2">
    <location>
        <begin position="1"/>
        <end position="21"/>
    </location>
</feature>
<feature type="modified residue" description="Leucine amide" evidence="2">
    <location>
        <position position="21"/>
    </location>
</feature>
<reference evidence="4" key="1">
    <citation type="journal article" date="2016" name="Comp. Biochem. Physiol.">
        <title>Peptidomic analysis of the extensive array of host-defense peptides in skin secretions of the dodecaploid frog Xenopus ruwenzoriensis (Pipidae).</title>
        <authorList>
            <person name="Coquet L."/>
            <person name="Kolodziejek J."/>
            <person name="Jouenne T."/>
            <person name="Nowotny N."/>
            <person name="King J.D."/>
            <person name="Conlon J.M."/>
        </authorList>
    </citation>
    <scope>PROTEIN SEQUENCE</scope>
    <scope>SUBCELLULAR LOCATION</scope>
    <scope>MASS SPECTROMETRY</scope>
    <scope>AMIDATION AT LEU-21</scope>
    <source>
        <tissue evidence="3">Skin secretion</tissue>
    </source>
</reference>
<accession>C0HKP2</accession>
<proteinExistence type="evidence at protein level"/>
<evidence type="ECO:0000250" key="1">
    <source>
        <dbReference type="UniProtKB" id="C0HK87"/>
    </source>
</evidence>
<evidence type="ECO:0000269" key="2">
    <source>
    </source>
</evidence>
<evidence type="ECO:0000303" key="3">
    <source>
    </source>
</evidence>
<evidence type="ECO:0000305" key="4"/>
<evidence type="ECO:0000305" key="5">
    <source>
    </source>
</evidence>
<dbReference type="GO" id="GO:0005576">
    <property type="term" value="C:extracellular region"/>
    <property type="evidence" value="ECO:0007669"/>
    <property type="project" value="UniProtKB-SubCell"/>
</dbReference>
<dbReference type="GO" id="GO:0006952">
    <property type="term" value="P:defense response"/>
    <property type="evidence" value="ECO:0007669"/>
    <property type="project" value="UniProtKB-KW"/>
</dbReference>
<sequence>GMATKAGTIVGKIAKVALNAL</sequence>
<keyword id="KW-0027">Amidation</keyword>
<keyword id="KW-0878">Amphibian defense peptide</keyword>
<keyword id="KW-0929">Antimicrobial</keyword>
<keyword id="KW-0903">Direct protein sequencing</keyword>
<keyword id="KW-0964">Secreted</keyword>
<organism evidence="3">
    <name type="scientific">Xenopus ruwenzoriensis</name>
    <name type="common">Uganda clawed frog</name>
    <dbReference type="NCBI Taxonomy" id="105430"/>
    <lineage>
        <taxon>Eukaryota</taxon>
        <taxon>Metazoa</taxon>
        <taxon>Chordata</taxon>
        <taxon>Craniata</taxon>
        <taxon>Vertebrata</taxon>
        <taxon>Euteleostomi</taxon>
        <taxon>Amphibia</taxon>
        <taxon>Batrachia</taxon>
        <taxon>Anura</taxon>
        <taxon>Pipoidea</taxon>
        <taxon>Pipidae</taxon>
        <taxon>Xenopodinae</taxon>
        <taxon>Xenopus</taxon>
        <taxon>Xenopus</taxon>
    </lineage>
</organism>